<sequence>MLMKQKGIIIKSVDYGESDKIITILNEYGAKIPLMARRAKKVKSGLQANTQLFVYGLFIYNKWRGMGTLNSVDVINQHYELQLDLFESSYASLCAETIDRSMEENEVSKYNYDLLQFVLSKINEGTPAQLMSVIVLLKNMSKFGFTASFDHCAITGIQDQSKLIAYSFKFDGAISESALYQDQHAFHLSNRTLYLLNILQQLPISKMNHLNIQQDILNEMSELLIMLYREYAGMFFKSQKLINQLNRLEKDSL</sequence>
<proteinExistence type="inferred from homology"/>
<feature type="chain" id="PRO_0000205002" description="DNA repair protein RecO">
    <location>
        <begin position="1"/>
        <end position="253"/>
    </location>
</feature>
<keyword id="KW-0227">DNA damage</keyword>
<keyword id="KW-0233">DNA recombination</keyword>
<keyword id="KW-0234">DNA repair</keyword>
<keyword id="KW-1185">Reference proteome</keyword>
<comment type="function">
    <text evidence="1">Involved in DNA repair and RecF pathway recombination.</text>
</comment>
<comment type="similarity">
    <text evidence="1">Belongs to the RecO family.</text>
</comment>
<organism>
    <name type="scientific">Staphylococcus epidermidis (strain ATCC 35984 / DSM 28319 / BCRC 17069 / CCUG 31568 / BM 3577 / RP62A)</name>
    <dbReference type="NCBI Taxonomy" id="176279"/>
    <lineage>
        <taxon>Bacteria</taxon>
        <taxon>Bacillati</taxon>
        <taxon>Bacillota</taxon>
        <taxon>Bacilli</taxon>
        <taxon>Bacillales</taxon>
        <taxon>Staphylococcaceae</taxon>
        <taxon>Staphylococcus</taxon>
    </lineage>
</organism>
<dbReference type="EMBL" id="CP000029">
    <property type="protein sequence ID" value="AAW54454.1"/>
    <property type="molecule type" value="Genomic_DNA"/>
</dbReference>
<dbReference type="RefSeq" id="WP_001830983.1">
    <property type="nucleotide sequence ID" value="NC_002976.3"/>
</dbReference>
<dbReference type="SMR" id="Q5HNY1"/>
<dbReference type="STRING" id="176279.SERP1133"/>
<dbReference type="GeneID" id="50018631"/>
<dbReference type="KEGG" id="ser:SERP1133"/>
<dbReference type="eggNOG" id="COG1381">
    <property type="taxonomic scope" value="Bacteria"/>
</dbReference>
<dbReference type="HOGENOM" id="CLU_066632_4_0_9"/>
<dbReference type="Proteomes" id="UP000000531">
    <property type="component" value="Chromosome"/>
</dbReference>
<dbReference type="GO" id="GO:0043590">
    <property type="term" value="C:bacterial nucleoid"/>
    <property type="evidence" value="ECO:0007669"/>
    <property type="project" value="TreeGrafter"/>
</dbReference>
<dbReference type="GO" id="GO:0006310">
    <property type="term" value="P:DNA recombination"/>
    <property type="evidence" value="ECO:0007669"/>
    <property type="project" value="UniProtKB-UniRule"/>
</dbReference>
<dbReference type="GO" id="GO:0006302">
    <property type="term" value="P:double-strand break repair"/>
    <property type="evidence" value="ECO:0007669"/>
    <property type="project" value="TreeGrafter"/>
</dbReference>
<dbReference type="Gene3D" id="2.40.50.140">
    <property type="entry name" value="Nucleic acid-binding proteins"/>
    <property type="match status" value="1"/>
</dbReference>
<dbReference type="Gene3D" id="1.20.1440.120">
    <property type="entry name" value="Recombination protein O, C-terminal domain"/>
    <property type="match status" value="1"/>
</dbReference>
<dbReference type="HAMAP" id="MF_00201">
    <property type="entry name" value="RecO"/>
    <property type="match status" value="1"/>
</dbReference>
<dbReference type="InterPro" id="IPR037278">
    <property type="entry name" value="ARFGAP/RecO"/>
</dbReference>
<dbReference type="InterPro" id="IPR022572">
    <property type="entry name" value="DNA_rep/recomb_RecO_N"/>
</dbReference>
<dbReference type="InterPro" id="IPR012340">
    <property type="entry name" value="NA-bd_OB-fold"/>
</dbReference>
<dbReference type="InterPro" id="IPR003717">
    <property type="entry name" value="RecO"/>
</dbReference>
<dbReference type="InterPro" id="IPR042242">
    <property type="entry name" value="RecO_C"/>
</dbReference>
<dbReference type="NCBIfam" id="TIGR00613">
    <property type="entry name" value="reco"/>
    <property type="match status" value="1"/>
</dbReference>
<dbReference type="PANTHER" id="PTHR33991">
    <property type="entry name" value="DNA REPAIR PROTEIN RECO"/>
    <property type="match status" value="1"/>
</dbReference>
<dbReference type="PANTHER" id="PTHR33991:SF1">
    <property type="entry name" value="DNA REPAIR PROTEIN RECO"/>
    <property type="match status" value="1"/>
</dbReference>
<dbReference type="Pfam" id="PF02565">
    <property type="entry name" value="RecO_C"/>
    <property type="match status" value="1"/>
</dbReference>
<dbReference type="Pfam" id="PF11967">
    <property type="entry name" value="RecO_N"/>
    <property type="match status" value="1"/>
</dbReference>
<dbReference type="SUPFAM" id="SSF57863">
    <property type="entry name" value="ArfGap/RecO-like zinc finger"/>
    <property type="match status" value="1"/>
</dbReference>
<dbReference type="SUPFAM" id="SSF50249">
    <property type="entry name" value="Nucleic acid-binding proteins"/>
    <property type="match status" value="1"/>
</dbReference>
<protein>
    <recommendedName>
        <fullName evidence="1">DNA repair protein RecO</fullName>
    </recommendedName>
    <alternativeName>
        <fullName evidence="1">Recombination protein O</fullName>
    </alternativeName>
</protein>
<name>RECO_STAEQ</name>
<accession>Q5HNY1</accession>
<evidence type="ECO:0000255" key="1">
    <source>
        <dbReference type="HAMAP-Rule" id="MF_00201"/>
    </source>
</evidence>
<gene>
    <name evidence="1" type="primary">recO</name>
    <name type="ordered locus">SERP1133</name>
</gene>
<reference key="1">
    <citation type="journal article" date="2005" name="J. Bacteriol.">
        <title>Insights on evolution of virulence and resistance from the complete genome analysis of an early methicillin-resistant Staphylococcus aureus strain and a biofilm-producing methicillin-resistant Staphylococcus epidermidis strain.</title>
        <authorList>
            <person name="Gill S.R."/>
            <person name="Fouts D.E."/>
            <person name="Archer G.L."/>
            <person name="Mongodin E.F."/>
            <person name="DeBoy R.T."/>
            <person name="Ravel J."/>
            <person name="Paulsen I.T."/>
            <person name="Kolonay J.F."/>
            <person name="Brinkac L.M."/>
            <person name="Beanan M.J."/>
            <person name="Dodson R.J."/>
            <person name="Daugherty S.C."/>
            <person name="Madupu R."/>
            <person name="Angiuoli S.V."/>
            <person name="Durkin A.S."/>
            <person name="Haft D.H."/>
            <person name="Vamathevan J.J."/>
            <person name="Khouri H."/>
            <person name="Utterback T.R."/>
            <person name="Lee C."/>
            <person name="Dimitrov G."/>
            <person name="Jiang L."/>
            <person name="Qin H."/>
            <person name="Weidman J."/>
            <person name="Tran K."/>
            <person name="Kang K.H."/>
            <person name="Hance I.R."/>
            <person name="Nelson K.E."/>
            <person name="Fraser C.M."/>
        </authorList>
    </citation>
    <scope>NUCLEOTIDE SEQUENCE [LARGE SCALE GENOMIC DNA]</scope>
    <source>
        <strain>ATCC 35984 / DSM 28319 / BCRC 17069 / CCUG 31568 / BM 3577 / RP62A</strain>
    </source>
</reference>